<keyword id="KW-0067">ATP-binding</keyword>
<keyword id="KW-0963">Cytoplasm</keyword>
<keyword id="KW-0418">Kinase</keyword>
<keyword id="KW-0547">Nucleotide-binding</keyword>
<keyword id="KW-0665">Pyrimidine biosynthesis</keyword>
<keyword id="KW-0808">Transferase</keyword>
<comment type="function">
    <text evidence="1">Catalyzes the reversible phosphorylation of UMP to UDP.</text>
</comment>
<comment type="catalytic activity">
    <reaction evidence="1">
        <text>UMP + ATP = UDP + ADP</text>
        <dbReference type="Rhea" id="RHEA:24400"/>
        <dbReference type="ChEBI" id="CHEBI:30616"/>
        <dbReference type="ChEBI" id="CHEBI:57865"/>
        <dbReference type="ChEBI" id="CHEBI:58223"/>
        <dbReference type="ChEBI" id="CHEBI:456216"/>
        <dbReference type="EC" id="2.7.4.22"/>
    </reaction>
</comment>
<comment type="activity regulation">
    <text evidence="1">Inhibited by UTP.</text>
</comment>
<comment type="pathway">
    <text evidence="1">Pyrimidine metabolism; CTP biosynthesis via de novo pathway; UDP from UMP (UMPK route): step 1/1.</text>
</comment>
<comment type="subunit">
    <text evidence="1">Homohexamer.</text>
</comment>
<comment type="subcellular location">
    <subcellularLocation>
        <location evidence="1">Cytoplasm</location>
    </subcellularLocation>
</comment>
<comment type="similarity">
    <text evidence="1">Belongs to the UMP kinase family.</text>
</comment>
<proteinExistence type="inferred from homology"/>
<protein>
    <recommendedName>
        <fullName evidence="1">Uridylate kinase</fullName>
        <shortName evidence="1">UK</shortName>
        <ecNumber evidence="1">2.7.4.22</ecNumber>
    </recommendedName>
    <alternativeName>
        <fullName evidence="1">Uridine monophosphate kinase</fullName>
        <shortName evidence="1">UMP kinase</shortName>
        <shortName evidence="1">UMPK</shortName>
    </alternativeName>
</protein>
<evidence type="ECO:0000255" key="1">
    <source>
        <dbReference type="HAMAP-Rule" id="MF_01220"/>
    </source>
</evidence>
<accession>P65931</accession>
<accession>A1IPF9</accession>
<accession>Q9JQT5</accession>
<feature type="chain" id="PRO_0000143865" description="Uridylate kinase">
    <location>
        <begin position="1"/>
        <end position="239"/>
    </location>
</feature>
<feature type="binding site" evidence="1">
    <location>
        <begin position="13"/>
        <end position="16"/>
    </location>
    <ligand>
        <name>ATP</name>
        <dbReference type="ChEBI" id="CHEBI:30616"/>
    </ligand>
</feature>
<feature type="binding site" evidence="1">
    <location>
        <position position="55"/>
    </location>
    <ligand>
        <name>UMP</name>
        <dbReference type="ChEBI" id="CHEBI:57865"/>
    </ligand>
</feature>
<feature type="binding site" evidence="1">
    <location>
        <position position="56"/>
    </location>
    <ligand>
        <name>ATP</name>
        <dbReference type="ChEBI" id="CHEBI:30616"/>
    </ligand>
</feature>
<feature type="binding site" evidence="1">
    <location>
        <position position="60"/>
    </location>
    <ligand>
        <name>ATP</name>
        <dbReference type="ChEBI" id="CHEBI:30616"/>
    </ligand>
</feature>
<feature type="binding site" evidence="1">
    <location>
        <position position="75"/>
    </location>
    <ligand>
        <name>UMP</name>
        <dbReference type="ChEBI" id="CHEBI:57865"/>
    </ligand>
</feature>
<feature type="binding site" evidence="1">
    <location>
        <begin position="136"/>
        <end position="143"/>
    </location>
    <ligand>
        <name>UMP</name>
        <dbReference type="ChEBI" id="CHEBI:57865"/>
    </ligand>
</feature>
<feature type="binding site" evidence="1">
    <location>
        <position position="163"/>
    </location>
    <ligand>
        <name>ATP</name>
        <dbReference type="ChEBI" id="CHEBI:30616"/>
    </ligand>
</feature>
<feature type="binding site" evidence="1">
    <location>
        <position position="164"/>
    </location>
    <ligand>
        <name>ATP</name>
        <dbReference type="ChEBI" id="CHEBI:30616"/>
    </ligand>
</feature>
<feature type="binding site" evidence="1">
    <location>
        <position position="169"/>
    </location>
    <ligand>
        <name>ATP</name>
        <dbReference type="ChEBI" id="CHEBI:30616"/>
    </ligand>
</feature>
<feature type="binding site" evidence="1">
    <location>
        <position position="172"/>
    </location>
    <ligand>
        <name>ATP</name>
        <dbReference type="ChEBI" id="CHEBI:30616"/>
    </ligand>
</feature>
<name>PYRH_NEIMA</name>
<dbReference type="EC" id="2.7.4.22" evidence="1"/>
<dbReference type="EMBL" id="AL157959">
    <property type="protein sequence ID" value="CAM07628.1"/>
    <property type="molecule type" value="Genomic_DNA"/>
</dbReference>
<dbReference type="RefSeq" id="WP_002215090.1">
    <property type="nucleotide sequence ID" value="NC_003116.1"/>
</dbReference>
<dbReference type="SMR" id="P65931"/>
<dbReference type="EnsemblBacteria" id="CAM07628">
    <property type="protein sequence ID" value="CAM07628"/>
    <property type="gene ID" value="NMA0326"/>
</dbReference>
<dbReference type="KEGG" id="nma:NMA0326"/>
<dbReference type="HOGENOM" id="CLU_033861_0_0_4"/>
<dbReference type="UniPathway" id="UPA00159">
    <property type="reaction ID" value="UER00275"/>
</dbReference>
<dbReference type="Proteomes" id="UP000000626">
    <property type="component" value="Chromosome"/>
</dbReference>
<dbReference type="GO" id="GO:0005829">
    <property type="term" value="C:cytosol"/>
    <property type="evidence" value="ECO:0007669"/>
    <property type="project" value="TreeGrafter"/>
</dbReference>
<dbReference type="GO" id="GO:0005524">
    <property type="term" value="F:ATP binding"/>
    <property type="evidence" value="ECO:0007669"/>
    <property type="project" value="UniProtKB-KW"/>
</dbReference>
<dbReference type="GO" id="GO:0033862">
    <property type="term" value="F:UMP kinase activity"/>
    <property type="evidence" value="ECO:0007669"/>
    <property type="project" value="UniProtKB-EC"/>
</dbReference>
<dbReference type="GO" id="GO:0044210">
    <property type="term" value="P:'de novo' CTP biosynthetic process"/>
    <property type="evidence" value="ECO:0007669"/>
    <property type="project" value="UniProtKB-UniRule"/>
</dbReference>
<dbReference type="GO" id="GO:0006225">
    <property type="term" value="P:UDP biosynthetic process"/>
    <property type="evidence" value="ECO:0007669"/>
    <property type="project" value="TreeGrafter"/>
</dbReference>
<dbReference type="CDD" id="cd04254">
    <property type="entry name" value="AAK_UMPK-PyrH-Ec"/>
    <property type="match status" value="1"/>
</dbReference>
<dbReference type="FunFam" id="3.40.1160.10:FF:000001">
    <property type="entry name" value="Uridylate kinase"/>
    <property type="match status" value="1"/>
</dbReference>
<dbReference type="Gene3D" id="3.40.1160.10">
    <property type="entry name" value="Acetylglutamate kinase-like"/>
    <property type="match status" value="1"/>
</dbReference>
<dbReference type="HAMAP" id="MF_01220_B">
    <property type="entry name" value="PyrH_B"/>
    <property type="match status" value="1"/>
</dbReference>
<dbReference type="InterPro" id="IPR036393">
    <property type="entry name" value="AceGlu_kinase-like_sf"/>
</dbReference>
<dbReference type="InterPro" id="IPR001048">
    <property type="entry name" value="Asp/Glu/Uridylate_kinase"/>
</dbReference>
<dbReference type="InterPro" id="IPR011817">
    <property type="entry name" value="Uridylate_kinase"/>
</dbReference>
<dbReference type="InterPro" id="IPR015963">
    <property type="entry name" value="Uridylate_kinase_bac"/>
</dbReference>
<dbReference type="NCBIfam" id="TIGR02075">
    <property type="entry name" value="pyrH_bact"/>
    <property type="match status" value="1"/>
</dbReference>
<dbReference type="PANTHER" id="PTHR42833">
    <property type="entry name" value="URIDYLATE KINASE"/>
    <property type="match status" value="1"/>
</dbReference>
<dbReference type="PANTHER" id="PTHR42833:SF4">
    <property type="entry name" value="URIDYLATE KINASE PUMPKIN, CHLOROPLASTIC"/>
    <property type="match status" value="1"/>
</dbReference>
<dbReference type="Pfam" id="PF00696">
    <property type="entry name" value="AA_kinase"/>
    <property type="match status" value="1"/>
</dbReference>
<dbReference type="PIRSF" id="PIRSF005650">
    <property type="entry name" value="Uridylate_kin"/>
    <property type="match status" value="1"/>
</dbReference>
<dbReference type="SUPFAM" id="SSF53633">
    <property type="entry name" value="Carbamate kinase-like"/>
    <property type="match status" value="1"/>
</dbReference>
<gene>
    <name evidence="1" type="primary">pyrH</name>
    <name type="ordered locus">NMA0326</name>
</gene>
<reference key="1">
    <citation type="journal article" date="2000" name="Nature">
        <title>Complete DNA sequence of a serogroup A strain of Neisseria meningitidis Z2491.</title>
        <authorList>
            <person name="Parkhill J."/>
            <person name="Achtman M."/>
            <person name="James K.D."/>
            <person name="Bentley S.D."/>
            <person name="Churcher C.M."/>
            <person name="Klee S.R."/>
            <person name="Morelli G."/>
            <person name="Basham D."/>
            <person name="Brown D."/>
            <person name="Chillingworth T."/>
            <person name="Davies R.M."/>
            <person name="Davis P."/>
            <person name="Devlin K."/>
            <person name="Feltwell T."/>
            <person name="Hamlin N."/>
            <person name="Holroyd S."/>
            <person name="Jagels K."/>
            <person name="Leather S."/>
            <person name="Moule S."/>
            <person name="Mungall K.L."/>
            <person name="Quail M.A."/>
            <person name="Rajandream M.A."/>
            <person name="Rutherford K.M."/>
            <person name="Simmonds M."/>
            <person name="Skelton J."/>
            <person name="Whitehead S."/>
            <person name="Spratt B.G."/>
            <person name="Barrell B.G."/>
        </authorList>
    </citation>
    <scope>NUCLEOTIDE SEQUENCE [LARGE SCALE GENOMIC DNA]</scope>
    <source>
        <strain>DSM 15465 / Z2491</strain>
    </source>
</reference>
<organism>
    <name type="scientific">Neisseria meningitidis serogroup A / serotype 4A (strain DSM 15465 / Z2491)</name>
    <dbReference type="NCBI Taxonomy" id="122587"/>
    <lineage>
        <taxon>Bacteria</taxon>
        <taxon>Pseudomonadati</taxon>
        <taxon>Pseudomonadota</taxon>
        <taxon>Betaproteobacteria</taxon>
        <taxon>Neisseriales</taxon>
        <taxon>Neisseriaceae</taxon>
        <taxon>Neisseria</taxon>
    </lineage>
</organism>
<sequence length="239" mass="25700">MTQQIKYKRVLLKLSGESLMGSDPFGINHDTIVQTVGEIAEVVKMGVQVGIVVGGGNIFRGVSAQAGSMDRATADYMGMMATVMNALALKDAFETLGIKARVQSALSMQQIAETYARPKAIQYLEEGKVVIFAAGTGNPFFTTDTAAALRGAEMNCDVMLKATNVDGVYTADPKKDPSATRYETITFDEALLKNLKVMDATAFALCRERKLNIVVFGIAKEGSLKRVITGEDEGTLVHC</sequence>